<feature type="chain" id="PRO_0000202958" description="Kinetochore protein NDC80">
    <location>
        <begin position="1"/>
        <end position="691"/>
    </location>
</feature>
<feature type="region of interest" description="Disordered" evidence="2">
    <location>
        <begin position="1"/>
        <end position="95"/>
    </location>
</feature>
<feature type="coiled-coil region" evidence="1">
    <location>
        <begin position="376"/>
        <end position="446"/>
    </location>
</feature>
<feature type="coiled-coil region" evidence="1">
    <location>
        <begin position="522"/>
        <end position="686"/>
    </location>
</feature>
<feature type="compositionally biased region" description="Basic and acidic residues" evidence="2">
    <location>
        <begin position="10"/>
        <end position="19"/>
    </location>
</feature>
<feature type="compositionally biased region" description="Polar residues" evidence="2">
    <location>
        <begin position="20"/>
        <end position="42"/>
    </location>
</feature>
<feature type="compositionally biased region" description="Low complexity" evidence="2">
    <location>
        <begin position="54"/>
        <end position="65"/>
    </location>
</feature>
<feature type="modified residue" description="Phosphothreonine" evidence="21">
    <location>
        <position position="38"/>
    </location>
</feature>
<feature type="modified residue" description="Phosphothreonine" evidence="20">
    <location>
        <position position="248"/>
    </location>
</feature>
<feature type="mutagenesis site" description="Loss of function." evidence="7">
    <original>S</original>
    <variation>A</variation>
    <location>
        <position position="201"/>
    </location>
</feature>
<feature type="helix" evidence="23">
    <location>
        <begin position="122"/>
        <end position="138"/>
    </location>
</feature>
<feature type="helix" evidence="23">
    <location>
        <begin position="141"/>
        <end position="144"/>
    </location>
</feature>
<feature type="helix" evidence="23">
    <location>
        <begin position="151"/>
        <end position="155"/>
    </location>
</feature>
<feature type="helix" evidence="23">
    <location>
        <begin position="159"/>
        <end position="173"/>
    </location>
</feature>
<feature type="helix" evidence="23">
    <location>
        <begin position="183"/>
        <end position="185"/>
    </location>
</feature>
<feature type="helix" evidence="23">
    <location>
        <begin position="187"/>
        <end position="194"/>
    </location>
</feature>
<feature type="helix" evidence="22">
    <location>
        <begin position="199"/>
        <end position="201"/>
    </location>
</feature>
<feature type="helix" evidence="23">
    <location>
        <begin position="204"/>
        <end position="207"/>
    </location>
</feature>
<feature type="helix" evidence="23">
    <location>
        <begin position="215"/>
        <end position="246"/>
    </location>
</feature>
<feature type="helix" evidence="23">
    <location>
        <begin position="249"/>
        <end position="254"/>
    </location>
</feature>
<feature type="turn" evidence="23">
    <location>
        <begin position="261"/>
        <end position="263"/>
    </location>
</feature>
<feature type="helix" evidence="23">
    <location>
        <begin position="267"/>
        <end position="291"/>
    </location>
</feature>
<feature type="helix" evidence="23">
    <location>
        <begin position="298"/>
        <end position="348"/>
    </location>
</feature>
<feature type="helix" evidence="23">
    <location>
        <begin position="351"/>
        <end position="368"/>
    </location>
</feature>
<feature type="helix" evidence="23">
    <location>
        <begin position="632"/>
        <end position="639"/>
    </location>
</feature>
<feature type="helix" evidence="23">
    <location>
        <begin position="649"/>
        <end position="651"/>
    </location>
</feature>
<feature type="helix" evidence="24">
    <location>
        <begin position="680"/>
        <end position="683"/>
    </location>
</feature>
<gene>
    <name evidence="17" type="primary">NDC80</name>
    <name evidence="13" type="synonym">HEC1</name>
    <name evidence="16" type="synonym">TID3</name>
    <name evidence="19" type="ordered locus">YIL144W</name>
</gene>
<evidence type="ECO:0000255" key="1"/>
<evidence type="ECO:0000256" key="2">
    <source>
        <dbReference type="SAM" id="MobiDB-lite"/>
    </source>
</evidence>
<evidence type="ECO:0000269" key="3">
    <source>
    </source>
</evidence>
<evidence type="ECO:0000269" key="4">
    <source>
    </source>
</evidence>
<evidence type="ECO:0000269" key="5">
    <source>
    </source>
</evidence>
<evidence type="ECO:0000269" key="6">
    <source>
    </source>
</evidence>
<evidence type="ECO:0000269" key="7">
    <source>
    </source>
</evidence>
<evidence type="ECO:0000269" key="8">
    <source>
    </source>
</evidence>
<evidence type="ECO:0000269" key="9">
    <source>
    </source>
</evidence>
<evidence type="ECO:0000269" key="10">
    <source>
    </source>
</evidence>
<evidence type="ECO:0000269" key="11">
    <source>
    </source>
</evidence>
<evidence type="ECO:0000269" key="12">
    <source>
    </source>
</evidence>
<evidence type="ECO:0000303" key="13">
    <source>
    </source>
</evidence>
<evidence type="ECO:0000303" key="14">
    <source>
    </source>
</evidence>
<evidence type="ECO:0000303" key="15">
    <source>
    </source>
</evidence>
<evidence type="ECO:0000303" key="16">
    <source>
    </source>
</evidence>
<evidence type="ECO:0000303" key="17">
    <source>
    </source>
</evidence>
<evidence type="ECO:0000305" key="18"/>
<evidence type="ECO:0000312" key="19">
    <source>
        <dbReference type="SGD" id="S000001406"/>
    </source>
</evidence>
<evidence type="ECO:0007744" key="20">
    <source>
    </source>
</evidence>
<evidence type="ECO:0007744" key="21">
    <source>
    </source>
</evidence>
<evidence type="ECO:0007829" key="22">
    <source>
        <dbReference type="PDB" id="5TCS"/>
    </source>
</evidence>
<evidence type="ECO:0007829" key="23">
    <source>
        <dbReference type="PDB" id="7KDF"/>
    </source>
</evidence>
<evidence type="ECO:0007829" key="24">
    <source>
        <dbReference type="PDB" id="8G0Q"/>
    </source>
</evidence>
<name>NDC80_YEAST</name>
<reference key="1">
    <citation type="journal article" date="1997" name="Nature">
        <title>The nucleotide sequence of Saccharomyces cerevisiae chromosome IX.</title>
        <authorList>
            <person name="Churcher C.M."/>
            <person name="Bowman S."/>
            <person name="Badcock K."/>
            <person name="Bankier A.T."/>
            <person name="Brown D."/>
            <person name="Chillingworth T."/>
            <person name="Connor R."/>
            <person name="Devlin K."/>
            <person name="Gentles S."/>
            <person name="Hamlin N."/>
            <person name="Harris D.E."/>
            <person name="Horsnell T."/>
            <person name="Hunt S."/>
            <person name="Jagels K."/>
            <person name="Jones M."/>
            <person name="Lye G."/>
            <person name="Moule S."/>
            <person name="Odell C."/>
            <person name="Pearson D."/>
            <person name="Rajandream M.A."/>
            <person name="Rice P."/>
            <person name="Rowley N."/>
            <person name="Skelton J."/>
            <person name="Smith V."/>
            <person name="Walsh S.V."/>
            <person name="Whitehead S."/>
            <person name="Barrell B.G."/>
        </authorList>
    </citation>
    <scope>NUCLEOTIDE SEQUENCE [LARGE SCALE GENOMIC DNA]</scope>
    <source>
        <strain>ATCC 204508 / S288c</strain>
    </source>
</reference>
<reference key="2">
    <citation type="journal article" date="2014" name="G3 (Bethesda)">
        <title>The reference genome sequence of Saccharomyces cerevisiae: Then and now.</title>
        <authorList>
            <person name="Engel S.R."/>
            <person name="Dietrich F.S."/>
            <person name="Fisk D.G."/>
            <person name="Binkley G."/>
            <person name="Balakrishnan R."/>
            <person name="Costanzo M.C."/>
            <person name="Dwight S.S."/>
            <person name="Hitz B.C."/>
            <person name="Karra K."/>
            <person name="Nash R.S."/>
            <person name="Weng S."/>
            <person name="Wong E.D."/>
            <person name="Lloyd P."/>
            <person name="Skrzypek M.S."/>
            <person name="Miyasato S.R."/>
            <person name="Simison M."/>
            <person name="Cherry J.M."/>
        </authorList>
    </citation>
    <scope>GENOME REANNOTATION</scope>
    <source>
        <strain>ATCC 204508 / S288c</strain>
    </source>
</reference>
<reference key="3">
    <citation type="journal article" date="1990" name="J. Cell Biol.">
        <title>Components of the yeast spindle and spindle pole body.</title>
        <authorList>
            <person name="Rout M.P."/>
            <person name="Kilmartin J.V."/>
        </authorList>
    </citation>
    <scope>SUBCELLULAR LOCATION</scope>
</reference>
<reference key="4">
    <citation type="journal article" date="1997" name="Genetics">
        <title>DMC1 functions in a Saccharomyces cerevisiae meiotic pathway that is largely independent of the RAD51 pathway.</title>
        <authorList>
            <person name="Dresser M.E."/>
            <person name="Ewing D.J."/>
            <person name="Conrad M.N."/>
            <person name="Dominguez A.M."/>
            <person name="Barstead R."/>
            <person name="Jiang H."/>
            <person name="Kodadek T."/>
        </authorList>
    </citation>
    <scope>INTERACTION WITH DMC1</scope>
</reference>
<reference key="5">
    <citation type="journal article" date="1998" name="J. Cell Biol.">
        <title>Analysis of the Saccharomyces spindle pole by matrix-assisted laser desorption/ionization (MALDI) mass spectrometry.</title>
        <authorList>
            <person name="Wigge P.A."/>
            <person name="Jensen O.N."/>
            <person name="Holmes S."/>
            <person name="Soues S."/>
            <person name="Mann M."/>
            <person name="Kilmartin J.V."/>
        </authorList>
    </citation>
    <scope>IDENTIFICATION BY MASS SPECTROMETRY</scope>
    <scope>FUNCTION</scope>
    <scope>SUBCELLULAR LOCATION</scope>
</reference>
<reference key="6">
    <citation type="journal article" date="1999" name="Mol. Cell. Biol.">
        <title>Hec1p, an evolutionarily conserved coiled-coil protein, modulates chromosome segregation through interaction with SMC proteins.</title>
        <authorList>
            <person name="Zheng L."/>
            <person name="Chen Y."/>
            <person name="Lee W.-H."/>
        </authorList>
    </citation>
    <scope>FUNCTION</scope>
    <scope>SUBCELLULAR LOCATION</scope>
    <scope>INTERACTION WITH SMC1 AND SMC2</scope>
</reference>
<reference key="7">
    <citation type="journal article" date="2001" name="EMBO J.">
        <title>The budding yeast proteins Spc24p and Spc25p interact with Ndc80p and Nuf2p at the kinetochore and are important for kinetochore clustering and checkpoint control.</title>
        <authorList>
            <person name="Janke C."/>
            <person name="Ortiz J."/>
            <person name="Lechner J."/>
            <person name="Shevchenko A."/>
            <person name="Shevchenko A."/>
            <person name="Magiera M.M."/>
            <person name="Schramm C."/>
            <person name="Schiebel E."/>
        </authorList>
    </citation>
    <scope>SUBCELLULAR LOCATION</scope>
    <scope>INTERACTION WITH SPC24 AND SPC25</scope>
</reference>
<reference key="8">
    <citation type="journal article" date="2001" name="J. Cell Biol.">
        <title>The Ndc80p complex from Saccharomyces cerevisiae contains conserved centromere components and has a function in chromosome segregation.</title>
        <authorList>
            <person name="Wigge P.A."/>
            <person name="Kilmartin J.V."/>
        </authorList>
    </citation>
    <scope>FUNCTION OF THE NDC80 COMPLEX</scope>
    <scope>SUBCELLULAR LOCATION</scope>
    <scope>IDENTIFICATION IN THE NDC80 COMPLEX</scope>
</reference>
<reference key="9">
    <citation type="journal article" date="2002" name="J. Biol. Chem.">
        <title>Phosphorylation of the mitotic regulator protein Hec1 by Nek2 kinase is essential for faithful chromosome segregation.</title>
        <authorList>
            <person name="Chen Y."/>
            <person name="Riley D.J."/>
            <person name="Zheng L."/>
            <person name="Chen P.-L."/>
            <person name="Lee W.-H."/>
        </authorList>
    </citation>
    <scope>INTERACTION WITH KIN3</scope>
    <scope>MUTAGENESIS OF SER-201</scope>
</reference>
<reference key="10">
    <citation type="journal article" date="2002" name="Mol. Microbiol.">
        <title>Spc24 interacts with Mps2 and is required for chromosome segregation, but is not implicated in spindle pole body duplication.</title>
        <authorList>
            <person name="Le Masson I."/>
            <person name="Saveanu C."/>
            <person name="Chevalier A."/>
            <person name="Namane A."/>
            <person name="Gobin R."/>
            <person name="Fromont-Racine M."/>
            <person name="Jacquier A."/>
            <person name="Mann C."/>
        </authorList>
    </citation>
    <scope>INTERACTION WITH SPC24 AND SPC25</scope>
</reference>
<reference key="11">
    <citation type="journal article" date="2003" name="Genes Dev.">
        <title>The highly conserved Ndc80 complex is required for kinetochore assembly, chromosome congression, and spindle checkpoint activity.</title>
        <authorList>
            <person name="McCleland M.L."/>
            <person name="Gardner R.D."/>
            <person name="Kallio M.J."/>
            <person name="Daum J.R."/>
            <person name="Gorbsky G.J."/>
            <person name="Burke D.J."/>
            <person name="Stukenberg P.T."/>
        </authorList>
    </citation>
    <scope>FUNCTION OF THE NDC80 COMPLEX</scope>
</reference>
<reference key="12">
    <citation type="journal article" date="2003" name="Nature">
        <title>Global analysis of protein expression in yeast.</title>
        <authorList>
            <person name="Ghaemmaghami S."/>
            <person name="Huh W.-K."/>
            <person name="Bower K."/>
            <person name="Howson R.W."/>
            <person name="Belle A."/>
            <person name="Dephoure N."/>
            <person name="O'Shea E.K."/>
            <person name="Weissman J.S."/>
        </authorList>
    </citation>
    <scope>LEVEL OF PROTEIN EXPRESSION [LARGE SCALE ANALYSIS]</scope>
</reference>
<reference key="13">
    <citation type="journal article" date="2004" name="Mol. Biol. Cell">
        <title>The fission yeast kinetochore component Spc7 associates with the EB1 family member Mal3 and is required for kinetochore-spindle association.</title>
        <authorList>
            <person name="Kerres A."/>
            <person name="Vietmeier-Decker C."/>
            <person name="Ortiz J."/>
            <person name="Karig I."/>
            <person name="Beuter C."/>
            <person name="Hegemann J."/>
            <person name="Lechner J."/>
            <person name="Fleig U."/>
        </authorList>
    </citation>
    <scope>IDENTIFICATION IN THE NDC80 COMPLEX</scope>
</reference>
<reference key="14">
    <citation type="journal article" date="2008" name="Mol. Cell. Proteomics">
        <title>A multidimensional chromatography technology for in-depth phosphoproteome analysis.</title>
        <authorList>
            <person name="Albuquerque C.P."/>
            <person name="Smolka M.B."/>
            <person name="Payne S.H."/>
            <person name="Bafna V."/>
            <person name="Eng J."/>
            <person name="Zhou H."/>
        </authorList>
    </citation>
    <scope>PHOSPHORYLATION [LARGE SCALE ANALYSIS] AT THR-248</scope>
    <scope>IDENTIFICATION BY MASS SPECTROMETRY [LARGE SCALE ANALYSIS]</scope>
</reference>
<reference key="15">
    <citation type="journal article" date="2009" name="Science">
        <title>Global analysis of Cdk1 substrate phosphorylation sites provides insights into evolution.</title>
        <authorList>
            <person name="Holt L.J."/>
            <person name="Tuch B.B."/>
            <person name="Villen J."/>
            <person name="Johnson A.D."/>
            <person name="Gygi S.P."/>
            <person name="Morgan D.O."/>
        </authorList>
    </citation>
    <scope>PHOSPHORYLATION [LARGE SCALE ANALYSIS] AT THR-38</scope>
    <scope>IDENTIFICATION BY MASS SPECTROMETRY [LARGE SCALE ANALYSIS]</scope>
</reference>
<reference key="16">
    <citation type="journal article" date="2005" name="Proc. Natl. Acad. Sci. U.S.A.">
        <title>Molecular organization of the Ndc80 complex, an essential kinetochore component.</title>
        <authorList>
            <person name="Wei R.R."/>
            <person name="Sorger P.K."/>
            <person name="Harrison S.C."/>
        </authorList>
    </citation>
    <scope>3D-STRUCTURE MODELING OF THE NDC80 COMPLEX</scope>
</reference>
<keyword id="KW-0002">3D-structure</keyword>
<keyword id="KW-0131">Cell cycle</keyword>
<keyword id="KW-0132">Cell division</keyword>
<keyword id="KW-0137">Centromere</keyword>
<keyword id="KW-0158">Chromosome</keyword>
<keyword id="KW-0175">Coiled coil</keyword>
<keyword id="KW-0995">Kinetochore</keyword>
<keyword id="KW-0498">Mitosis</keyword>
<keyword id="KW-0539">Nucleus</keyword>
<keyword id="KW-0597">Phosphoprotein</keyword>
<keyword id="KW-1185">Reference proteome</keyword>
<proteinExistence type="evidence at protein level"/>
<accession>P40460</accession>
<accession>D6VVE3</accession>
<sequence length="691" mass="80487">MQSSTSTDQHVLHHMDPHRFTSQIPTATSSQLRRRNSTNQGLTDMINKSIARNTISGTGIPTGGINKNKRTRSTVAGGTNGTALALNDKSNSRNSVSRLSINQLGSLQQHLSNRDPRPLRDKNFQSAIQEEIYDYLKKNKFDIETNHPISIKFLKQPTQKGFIIIFKWLYLRLDPGYGFTKSIENEIYQILKNLRYPFLESINKSQISAVGGSNWHKFLGMLHWMVRTNIKLDMCLNKVDRSLINQNTQEITILSQPLKTLDEQDQRQERYELMVEKLLIDYFTESYKSFLKLEDNYEPSMQELKLGFEKFVHIINTDIANLQTQNDNLYEKYQEVMKISQKIKTTREKWKALKSDSNKYENYVNAMKQKSQEWPGKLEKMKSECELKEEEIKALQSNISELHKILRKKGISTEQFELQNQEREKLTRELDKINIQSDKLTSSIKSRKLEAEGIFKSLLDTLRQYDSSIQNLTRSRSQLGHNVNDSSLKINISENLLDRDFHEGISYEQLFPKGSGINESIKKSILKLNDEIQERIKTIEKDNITLEKDIKNLKHDINEKTQINEKLELELSEANSKFELSKQENERLLVAQRIEIEKMEKKINDSNLLMKTKISDAEELVTSTELKLEELKVDLNRKRYKLHQQVIHVIDITSKFKINIQSSLENSENELGNVIEELRNLEFETEHNVTN</sequence>
<protein>
    <recommendedName>
        <fullName evidence="14">Kinetochore protein NDC80</fullName>
    </recommendedName>
    <alternativeName>
        <fullName evidence="15">80 kDa spindle component protein</fullName>
    </alternativeName>
    <alternativeName>
        <fullName evidence="17">Nuclear division cycle protein 80</fullName>
    </alternativeName>
    <alternativeName>
        <fullName evidence="16">Two-hybrid interaction with DMC1 protein 3</fullName>
    </alternativeName>
</protein>
<organism>
    <name type="scientific">Saccharomyces cerevisiae (strain ATCC 204508 / S288c)</name>
    <name type="common">Baker's yeast</name>
    <dbReference type="NCBI Taxonomy" id="559292"/>
    <lineage>
        <taxon>Eukaryota</taxon>
        <taxon>Fungi</taxon>
        <taxon>Dikarya</taxon>
        <taxon>Ascomycota</taxon>
        <taxon>Saccharomycotina</taxon>
        <taxon>Saccharomycetes</taxon>
        <taxon>Saccharomycetales</taxon>
        <taxon>Saccharomycetaceae</taxon>
        <taxon>Saccharomyces</taxon>
    </lineage>
</organism>
<comment type="function">
    <text evidence="3 5 8 12">Acts as a component of the essential kinetochore-associated NDC80 complex, which is involved in chromosome segregation and spindle checkpoint activity.</text>
</comment>
<comment type="subunit">
    <text evidence="3 4 5 6 7 10 11">Component of the NDC80 complex, which consists of NDC80, NUF2, SPC24 and SPC25. The NDC80 complex is formed by two subcomplexes, NDC80-NUF2 and SPC24-SPC25, which are joined end-to-end through their coiled-coil domains. It has a rod-like structure with a length of 570 Angstroms and globular domains at either end. The NDC80-NUF2 globular domains are probably directed to microtubules, the SPC24-SPC25 globular domains to the centromere. NDC80 probably interacts with SMC1 and SMC2. Also interacts with KIN3. Interacts with DMC1.</text>
</comment>
<comment type="interaction">
    <interactant intactId="EBI-25247">
        <id>P40460</id>
    </interactant>
    <interactant intactId="EBI-23268">
        <id>P53267</id>
        <label>DAM1</label>
    </interactant>
    <organismsDiffer>false</organismsDiffer>
    <experiments>4</experiments>
</comment>
<comment type="interaction">
    <interactant intactId="EBI-25247">
        <id>P40460</id>
    </interactant>
    <interactant intactId="EBI-11224">
        <id>P54199</id>
        <label>MPS1</label>
    </interactant>
    <organismsDiffer>false</organismsDiffer>
    <experiments>4</experiments>
</comment>
<comment type="interaction">
    <interactant intactId="EBI-25247">
        <id>P40460</id>
    </interactant>
    <interactant intactId="EBI-25247">
        <id>P40460</id>
        <label>NDC80</label>
    </interactant>
    <organismsDiffer>false</organismsDiffer>
    <experiments>4</experiments>
</comment>
<comment type="interaction">
    <interactant intactId="EBI-25247">
        <id>P40460</id>
    </interactant>
    <interactant intactId="EBI-12098">
        <id>P47149</id>
        <label>NNF1</label>
    </interactant>
    <organismsDiffer>false</organismsDiffer>
    <experiments>3</experiments>
</comment>
<comment type="interaction">
    <interactant intactId="EBI-25247">
        <id>P40460</id>
    </interactant>
    <interactant intactId="EBI-12377">
        <id>P33895</id>
        <label>NUF2</label>
    </interactant>
    <organismsDiffer>false</organismsDiffer>
    <experiments>16</experiments>
</comment>
<comment type="interaction">
    <interactant intactId="EBI-25247">
        <id>P40460</id>
    </interactant>
    <interactant intactId="EBI-23870">
        <id>P53148</id>
        <label>SPC105</label>
    </interactant>
    <organismsDiffer>false</organismsDiffer>
    <experiments>2</experiments>
</comment>
<comment type="interaction">
    <interactant intactId="EBI-25247">
        <id>P40460</id>
    </interactant>
    <interactant intactId="EBI-27228">
        <id>Q04477</id>
        <label>SPC24</label>
    </interactant>
    <organismsDiffer>false</organismsDiffer>
    <experiments>20</experiments>
</comment>
<comment type="interaction">
    <interactant intactId="EBI-25247">
        <id>P40460</id>
    </interactant>
    <interactant intactId="EBI-22458">
        <id>P40014</id>
        <label>SPC25</label>
    </interactant>
    <organismsDiffer>false</organismsDiffer>
    <experiments>13</experiments>
</comment>
<comment type="subcellular location">
    <subcellularLocation>
        <location>Nucleus</location>
    </subcellularLocation>
    <subcellularLocation>
        <location>Chromosome</location>
        <location>Centromere</location>
        <location>Kinetochore</location>
    </subcellularLocation>
    <text>Associated with kinetochores.</text>
</comment>
<comment type="miscellaneous">
    <text evidence="9">Present with 1160 molecules/cell in log phase SD medium.</text>
</comment>
<comment type="similarity">
    <text evidence="18">Belongs to the NDC80/HEC1 family.</text>
</comment>
<dbReference type="EMBL" id="Z38059">
    <property type="protein sequence ID" value="CAA86134.1"/>
    <property type="molecule type" value="Genomic_DNA"/>
</dbReference>
<dbReference type="EMBL" id="BK006942">
    <property type="protein sequence ID" value="DAA08409.1"/>
    <property type="molecule type" value="Genomic_DNA"/>
</dbReference>
<dbReference type="PIR" id="S48390">
    <property type="entry name" value="S48390"/>
</dbReference>
<dbReference type="RefSeq" id="NP_012122.3">
    <property type="nucleotide sequence ID" value="NM_001179492.3"/>
</dbReference>
<dbReference type="PDB" id="5TCS">
    <property type="method" value="X-ray"/>
    <property type="resolution" value="2.83 A"/>
    <property type="chains" value="A=114-318, A=621-689"/>
</dbReference>
<dbReference type="PDB" id="5TD8">
    <property type="method" value="X-ray"/>
    <property type="resolution" value="7.53 A"/>
    <property type="chains" value="A=114-368, A=621-691"/>
</dbReference>
<dbReference type="PDB" id="7KDF">
    <property type="method" value="X-ray"/>
    <property type="resolution" value="2.72 A"/>
    <property type="chains" value="A=114-689"/>
</dbReference>
<dbReference type="PDB" id="8G0Q">
    <property type="method" value="X-ray"/>
    <property type="resolution" value="3.22 A"/>
    <property type="chains" value="A/C=106-368"/>
</dbReference>
<dbReference type="PDB" id="8Q84">
    <property type="method" value="EM"/>
    <property type="resolution" value="3.15 A"/>
    <property type="chains" value="A/F=1-691"/>
</dbReference>
<dbReference type="PDB" id="8Q85">
    <property type="method" value="EM"/>
    <property type="resolution" value="3.97 A"/>
    <property type="chains" value="F=1-691"/>
</dbReference>
<dbReference type="PDB" id="8QAU">
    <property type="method" value="EM"/>
    <property type="resolution" value="3.54 A"/>
    <property type="chains" value="A=1-691"/>
</dbReference>
<dbReference type="PDB" id="8V10">
    <property type="method" value="X-ray"/>
    <property type="resolution" value="3.02 A"/>
    <property type="chains" value="A=114-691"/>
</dbReference>
<dbReference type="PDB" id="8V11">
    <property type="method" value="X-ray"/>
    <property type="resolution" value="3.95 A"/>
    <property type="chains" value="A/E=114-684"/>
</dbReference>
<dbReference type="PDBsum" id="5TCS"/>
<dbReference type="PDBsum" id="5TD8"/>
<dbReference type="PDBsum" id="7KDF"/>
<dbReference type="PDBsum" id="8G0Q"/>
<dbReference type="PDBsum" id="8Q84"/>
<dbReference type="PDBsum" id="8Q85"/>
<dbReference type="PDBsum" id="8QAU"/>
<dbReference type="PDBsum" id="8V10"/>
<dbReference type="PDBsum" id="8V11"/>
<dbReference type="EMDB" id="EMD-18246"/>
<dbReference type="EMDB" id="EMD-18247"/>
<dbReference type="EMDB" id="EMD-18304"/>
<dbReference type="SMR" id="P40460"/>
<dbReference type="BioGRID" id="34848">
    <property type="interactions" value="325"/>
</dbReference>
<dbReference type="ComplexPortal" id="CPX-548">
    <property type="entry name" value="NDC80 complex"/>
</dbReference>
<dbReference type="DIP" id="DIP-818N"/>
<dbReference type="ELM" id="P40460"/>
<dbReference type="FunCoup" id="P40460">
    <property type="interactions" value="400"/>
</dbReference>
<dbReference type="IntAct" id="P40460">
    <property type="interactions" value="47"/>
</dbReference>
<dbReference type="MINT" id="P40460"/>
<dbReference type="STRING" id="4932.YIL144W"/>
<dbReference type="iPTMnet" id="P40460"/>
<dbReference type="PaxDb" id="4932-YIL144W"/>
<dbReference type="PeptideAtlas" id="P40460"/>
<dbReference type="ABCD" id="P40460">
    <property type="antibodies" value="1 sequenced antibody"/>
</dbReference>
<dbReference type="EnsemblFungi" id="YIL144W_mRNA">
    <property type="protein sequence ID" value="YIL144W"/>
    <property type="gene ID" value="YIL144W"/>
</dbReference>
<dbReference type="GeneID" id="854662"/>
<dbReference type="KEGG" id="sce:YIL144W"/>
<dbReference type="AGR" id="SGD:S000001406"/>
<dbReference type="SGD" id="S000001406">
    <property type="gene designation" value="NDC80"/>
</dbReference>
<dbReference type="VEuPathDB" id="FungiDB:YIL144W"/>
<dbReference type="eggNOG" id="KOG0995">
    <property type="taxonomic scope" value="Eukaryota"/>
</dbReference>
<dbReference type="GeneTree" id="ENSGT00390000018386"/>
<dbReference type="HOGENOM" id="CLU_012583_1_2_1"/>
<dbReference type="InParanoid" id="P40460"/>
<dbReference type="OMA" id="PSHKFQK"/>
<dbReference type="OrthoDB" id="7459479at2759"/>
<dbReference type="BioCyc" id="YEAST:G3O-31394-MONOMER"/>
<dbReference type="BioGRID-ORCS" id="854662">
    <property type="hits" value="2 hits in 10 CRISPR screens"/>
</dbReference>
<dbReference type="PRO" id="PR:P40460"/>
<dbReference type="Proteomes" id="UP000002311">
    <property type="component" value="Chromosome IX"/>
</dbReference>
<dbReference type="RNAct" id="P40460">
    <property type="molecule type" value="protein"/>
</dbReference>
<dbReference type="GO" id="GO:0000779">
    <property type="term" value="C:condensed chromosome, centromeric region"/>
    <property type="evidence" value="ECO:0000314"/>
    <property type="project" value="SGD"/>
</dbReference>
<dbReference type="GO" id="GO:0000776">
    <property type="term" value="C:kinetochore"/>
    <property type="evidence" value="ECO:0000314"/>
    <property type="project" value="SGD"/>
</dbReference>
<dbReference type="GO" id="GO:0031262">
    <property type="term" value="C:Ndc80 complex"/>
    <property type="evidence" value="ECO:0000314"/>
    <property type="project" value="SGD"/>
</dbReference>
<dbReference type="GO" id="GO:0005634">
    <property type="term" value="C:nucleus"/>
    <property type="evidence" value="ECO:0007669"/>
    <property type="project" value="UniProtKB-SubCell"/>
</dbReference>
<dbReference type="GO" id="GO:0000940">
    <property type="term" value="C:outer kinetochore"/>
    <property type="evidence" value="ECO:0000314"/>
    <property type="project" value="UniProtKB"/>
</dbReference>
<dbReference type="GO" id="GO:0042802">
    <property type="term" value="F:identical protein binding"/>
    <property type="evidence" value="ECO:0000353"/>
    <property type="project" value="IntAct"/>
</dbReference>
<dbReference type="GO" id="GO:0051315">
    <property type="term" value="P:attachment of mitotic spindle microtubules to kinetochore"/>
    <property type="evidence" value="ECO:0000318"/>
    <property type="project" value="GO_Central"/>
</dbReference>
<dbReference type="GO" id="GO:0051301">
    <property type="term" value="P:cell division"/>
    <property type="evidence" value="ECO:0007669"/>
    <property type="project" value="UniProtKB-KW"/>
</dbReference>
<dbReference type="GO" id="GO:0007059">
    <property type="term" value="P:chromosome segregation"/>
    <property type="evidence" value="ECO:0000315"/>
    <property type="project" value="SGD"/>
</dbReference>
<dbReference type="GO" id="GO:1990758">
    <property type="term" value="P:mitotic sister chromatid biorientation"/>
    <property type="evidence" value="ECO:0000315"/>
    <property type="project" value="UniProtKB"/>
</dbReference>
<dbReference type="GO" id="GO:0034501">
    <property type="term" value="P:protein localization to kinetochore"/>
    <property type="evidence" value="ECO:0000315"/>
    <property type="project" value="SGD"/>
</dbReference>
<dbReference type="FunFam" id="1.10.418.30:FF:000001">
    <property type="entry name" value="Probable kinetochore protein ndc80"/>
    <property type="match status" value="1"/>
</dbReference>
<dbReference type="Gene3D" id="6.10.250.1950">
    <property type="match status" value="1"/>
</dbReference>
<dbReference type="Gene3D" id="1.10.418.30">
    <property type="entry name" value="Ncd80 complex, Ncd80 subunit"/>
    <property type="match status" value="1"/>
</dbReference>
<dbReference type="InterPro" id="IPR040967">
    <property type="entry name" value="DUF5595"/>
</dbReference>
<dbReference type="InterPro" id="IPR005550">
    <property type="entry name" value="Kinetochore_Ndc80"/>
</dbReference>
<dbReference type="InterPro" id="IPR055260">
    <property type="entry name" value="Ndc80_CH"/>
</dbReference>
<dbReference type="InterPro" id="IPR038273">
    <property type="entry name" value="Ndc80_sf"/>
</dbReference>
<dbReference type="PANTHER" id="PTHR10643">
    <property type="entry name" value="KINETOCHORE PROTEIN NDC80"/>
    <property type="match status" value="1"/>
</dbReference>
<dbReference type="PANTHER" id="PTHR10643:SF2">
    <property type="entry name" value="KINETOCHORE PROTEIN NDC80 HOMOLOG"/>
    <property type="match status" value="1"/>
</dbReference>
<dbReference type="Pfam" id="PF18077">
    <property type="entry name" value="DUF5595"/>
    <property type="match status" value="1"/>
</dbReference>
<dbReference type="Pfam" id="PF03801">
    <property type="entry name" value="Ndc80_HEC"/>
    <property type="match status" value="1"/>
</dbReference>